<proteinExistence type="inferred from homology"/>
<keyword id="KW-0413">Isomerase</keyword>
<keyword id="KW-1185">Reference proteome</keyword>
<keyword id="KW-0819">tRNA processing</keyword>
<name>TRUA_FINM2</name>
<dbReference type="EC" id="5.4.99.12" evidence="1"/>
<dbReference type="EMBL" id="AP008971">
    <property type="protein sequence ID" value="BAG08531.1"/>
    <property type="molecule type" value="Genomic_DNA"/>
</dbReference>
<dbReference type="RefSeq" id="WP_012290837.1">
    <property type="nucleotide sequence ID" value="NC_010376.1"/>
</dbReference>
<dbReference type="SMR" id="B0S2E1"/>
<dbReference type="STRING" id="334413.FMG_1113"/>
<dbReference type="KEGG" id="fma:FMG_1113"/>
<dbReference type="eggNOG" id="COG0101">
    <property type="taxonomic scope" value="Bacteria"/>
</dbReference>
<dbReference type="HOGENOM" id="CLU_014673_0_1_9"/>
<dbReference type="Proteomes" id="UP000001319">
    <property type="component" value="Chromosome"/>
</dbReference>
<dbReference type="GO" id="GO:0003723">
    <property type="term" value="F:RNA binding"/>
    <property type="evidence" value="ECO:0007669"/>
    <property type="project" value="InterPro"/>
</dbReference>
<dbReference type="GO" id="GO:0160147">
    <property type="term" value="F:tRNA pseudouridine(38-40) synthase activity"/>
    <property type="evidence" value="ECO:0007669"/>
    <property type="project" value="UniProtKB-EC"/>
</dbReference>
<dbReference type="GO" id="GO:0031119">
    <property type="term" value="P:tRNA pseudouridine synthesis"/>
    <property type="evidence" value="ECO:0007669"/>
    <property type="project" value="UniProtKB-UniRule"/>
</dbReference>
<dbReference type="CDD" id="cd02570">
    <property type="entry name" value="PseudoU_synth_EcTruA"/>
    <property type="match status" value="1"/>
</dbReference>
<dbReference type="FunFam" id="3.30.70.580:FF:000001">
    <property type="entry name" value="tRNA pseudouridine synthase A"/>
    <property type="match status" value="1"/>
</dbReference>
<dbReference type="Gene3D" id="3.30.70.660">
    <property type="entry name" value="Pseudouridine synthase I, catalytic domain, C-terminal subdomain"/>
    <property type="match status" value="1"/>
</dbReference>
<dbReference type="Gene3D" id="3.30.70.580">
    <property type="entry name" value="Pseudouridine synthase I, catalytic domain, N-terminal subdomain"/>
    <property type="match status" value="1"/>
</dbReference>
<dbReference type="HAMAP" id="MF_00171">
    <property type="entry name" value="TruA"/>
    <property type="match status" value="1"/>
</dbReference>
<dbReference type="InterPro" id="IPR020103">
    <property type="entry name" value="PsdUridine_synth_cat_dom_sf"/>
</dbReference>
<dbReference type="InterPro" id="IPR001406">
    <property type="entry name" value="PsdUridine_synth_TruA"/>
</dbReference>
<dbReference type="InterPro" id="IPR020097">
    <property type="entry name" value="PsdUridine_synth_TruA_a/b_dom"/>
</dbReference>
<dbReference type="InterPro" id="IPR020095">
    <property type="entry name" value="PsdUridine_synth_TruA_C"/>
</dbReference>
<dbReference type="InterPro" id="IPR020094">
    <property type="entry name" value="TruA/RsuA/RluB/E/F_N"/>
</dbReference>
<dbReference type="NCBIfam" id="TIGR00071">
    <property type="entry name" value="hisT_truA"/>
    <property type="match status" value="1"/>
</dbReference>
<dbReference type="PANTHER" id="PTHR11142">
    <property type="entry name" value="PSEUDOURIDYLATE SYNTHASE"/>
    <property type="match status" value="1"/>
</dbReference>
<dbReference type="PANTHER" id="PTHR11142:SF0">
    <property type="entry name" value="TRNA PSEUDOURIDINE SYNTHASE-LIKE 1"/>
    <property type="match status" value="1"/>
</dbReference>
<dbReference type="Pfam" id="PF01416">
    <property type="entry name" value="PseudoU_synth_1"/>
    <property type="match status" value="2"/>
</dbReference>
<dbReference type="PIRSF" id="PIRSF001430">
    <property type="entry name" value="tRNA_psdUrid_synth"/>
    <property type="match status" value="1"/>
</dbReference>
<dbReference type="SUPFAM" id="SSF55120">
    <property type="entry name" value="Pseudouridine synthase"/>
    <property type="match status" value="1"/>
</dbReference>
<gene>
    <name evidence="1" type="primary">truA</name>
    <name type="ordered locus">FMG_1113</name>
</gene>
<reference key="1">
    <citation type="journal article" date="2008" name="DNA Res.">
        <title>Complete genome sequence of Finegoldia magna, an anaerobic opportunistic pathogen.</title>
        <authorList>
            <person name="Goto T."/>
            <person name="Yamashita A."/>
            <person name="Hirakawa H."/>
            <person name="Matsutani M."/>
            <person name="Todo K."/>
            <person name="Ohshima K."/>
            <person name="Toh H."/>
            <person name="Miyamoto K."/>
            <person name="Kuhara S."/>
            <person name="Hattori M."/>
            <person name="Shimizu T."/>
            <person name="Akimoto S."/>
        </authorList>
    </citation>
    <scope>NUCLEOTIDE SEQUENCE [LARGE SCALE GENOMIC DNA]</scope>
    <source>
        <strain>ATCC 29328 / DSM 20472 / WAL 2508</strain>
    </source>
</reference>
<protein>
    <recommendedName>
        <fullName evidence="1">tRNA pseudouridine synthase A</fullName>
        <ecNumber evidence="1">5.4.99.12</ecNumber>
    </recommendedName>
    <alternativeName>
        <fullName evidence="1">tRNA pseudouridine(38-40) synthase</fullName>
    </alternativeName>
    <alternativeName>
        <fullName evidence="1">tRNA pseudouridylate synthase I</fullName>
    </alternativeName>
    <alternativeName>
        <fullName evidence="1">tRNA-uridine isomerase I</fullName>
    </alternativeName>
</protein>
<evidence type="ECO:0000255" key="1">
    <source>
        <dbReference type="HAMAP-Rule" id="MF_00171"/>
    </source>
</evidence>
<feature type="chain" id="PRO_1000097743" description="tRNA pseudouridine synthase A">
    <location>
        <begin position="1"/>
        <end position="244"/>
    </location>
</feature>
<feature type="active site" description="Nucleophile" evidence="1">
    <location>
        <position position="52"/>
    </location>
</feature>
<feature type="binding site" evidence="1">
    <location>
        <position position="110"/>
    </location>
    <ligand>
        <name>substrate</name>
    </ligand>
</feature>
<organism>
    <name type="scientific">Finegoldia magna (strain ATCC 29328 / DSM 20472 / WAL 2508)</name>
    <name type="common">Peptostreptococcus magnus</name>
    <dbReference type="NCBI Taxonomy" id="334413"/>
    <lineage>
        <taxon>Bacteria</taxon>
        <taxon>Bacillati</taxon>
        <taxon>Bacillota</taxon>
        <taxon>Tissierellia</taxon>
        <taxon>Tissierellales</taxon>
        <taxon>Peptoniphilaceae</taxon>
        <taxon>Finegoldia</taxon>
    </lineage>
</organism>
<comment type="function">
    <text evidence="1">Formation of pseudouridine at positions 38, 39 and 40 in the anticodon stem and loop of transfer RNAs.</text>
</comment>
<comment type="catalytic activity">
    <reaction evidence="1">
        <text>uridine(38/39/40) in tRNA = pseudouridine(38/39/40) in tRNA</text>
        <dbReference type="Rhea" id="RHEA:22376"/>
        <dbReference type="Rhea" id="RHEA-COMP:10085"/>
        <dbReference type="Rhea" id="RHEA-COMP:10087"/>
        <dbReference type="ChEBI" id="CHEBI:65314"/>
        <dbReference type="ChEBI" id="CHEBI:65315"/>
        <dbReference type="EC" id="5.4.99.12"/>
    </reaction>
</comment>
<comment type="subunit">
    <text evidence="1">Homodimer.</text>
</comment>
<comment type="similarity">
    <text evidence="1">Belongs to the tRNA pseudouridine synthase TruA family.</text>
</comment>
<accession>B0S2E1</accession>
<sequence length="244" mass="28280">MKNIKLTVQYDGSKFYGWQKLNDLPSVQLEIEKAVTKMVHQPVKINGAGRTDKGVHAKGQVCNFIVDTDISANQFLMGVNHFTSDSIVIVKSEEMDLDFHARFSAKSKTYKYILCNKYYMEPWFNDYKGHRKYYLDFDLLLKCRDMLIGKHDFTSFVNDLEEDINPVRTIDEITIEKIDDDIVFTFKAESFLRNMVRILVGSMVDVARGRKSIDWLKNALENKDRQSAGITIEPSGLYLMDIEY</sequence>